<evidence type="ECO:0000250" key="1"/>
<evidence type="ECO:0000255" key="2">
    <source>
        <dbReference type="PROSITE-ProRule" id="PRU00517"/>
    </source>
</evidence>
<evidence type="ECO:0000255" key="3">
    <source>
        <dbReference type="PROSITE-ProRule" id="PRU01007"/>
    </source>
</evidence>
<comment type="catalytic activity">
    <reaction>
        <text>prephenate + H(+) = 3-phenylpyruvate + CO2 + H2O</text>
        <dbReference type="Rhea" id="RHEA:21648"/>
        <dbReference type="ChEBI" id="CHEBI:15377"/>
        <dbReference type="ChEBI" id="CHEBI:15378"/>
        <dbReference type="ChEBI" id="CHEBI:16526"/>
        <dbReference type="ChEBI" id="CHEBI:18005"/>
        <dbReference type="ChEBI" id="CHEBI:29934"/>
        <dbReference type="EC" id="4.2.1.51"/>
    </reaction>
</comment>
<comment type="pathway">
    <text>Amino-acid biosynthesis; L-phenylalanine biosynthesis; phenylpyruvate from prephenate: step 1/1.</text>
</comment>
<keyword id="KW-0028">Amino-acid biosynthesis</keyword>
<keyword id="KW-0057">Aromatic amino acid biosynthesis</keyword>
<keyword id="KW-0456">Lyase</keyword>
<keyword id="KW-0584">Phenylalanine biosynthesis</keyword>
<name>PHEA_AMYME</name>
<protein>
    <recommendedName>
        <fullName>Prephenate dehydratase</fullName>
        <shortName>PDT</shortName>
        <ecNumber>4.2.1.51</ecNumber>
    </recommendedName>
</protein>
<organism>
    <name type="scientific">Amycolatopsis methanolica</name>
    <dbReference type="NCBI Taxonomy" id="1814"/>
    <lineage>
        <taxon>Bacteria</taxon>
        <taxon>Bacillati</taxon>
        <taxon>Actinomycetota</taxon>
        <taxon>Actinomycetes</taxon>
        <taxon>Pseudonocardiales</taxon>
        <taxon>Pseudonocardiaceae</taxon>
        <taxon>Amycolatopsis</taxon>
        <taxon>Amycolatopsis methanolica group</taxon>
    </lineage>
</organism>
<sequence length="304" mass="32321">MSRIAYFGPVGTFTEQAARTFMAAGDELVAAETIPKALDAVRRGEADAACVPVENSVEGAVPATLDSLAVGEPLIGVAEALLPVHFSVLTRDDVGEIRTVASHPHALAQVRKWLEDNLPGARVVAAGSTAAAAVAVQAGEFDAAVTAPVAVEHYPLKVLATEVADVRDARTRFLLMRRPPVVLPEPTGADRTSIVAAAANRTGTLAELLTELATRGINLTRLDARPHKQNFGEYRFFIDFEGHVAEPRIADALAALRRRCRDVRFLGSFARADGVAATIEPAARNEDFTDAADWVAAVQRGEQA</sequence>
<dbReference type="EC" id="4.2.1.51"/>
<dbReference type="EMBL" id="L47666">
    <property type="protein sequence ID" value="AAA88840.1"/>
    <property type="molecule type" value="Genomic_DNA"/>
</dbReference>
<dbReference type="RefSeq" id="WP_017986158.1">
    <property type="nucleotide sequence ID" value="NZ_JBFATH010000001.1"/>
</dbReference>
<dbReference type="SMR" id="Q44104"/>
<dbReference type="SABIO-RK" id="Q44104"/>
<dbReference type="UniPathway" id="UPA00121">
    <property type="reaction ID" value="UER00345"/>
</dbReference>
<dbReference type="GO" id="GO:0005737">
    <property type="term" value="C:cytoplasm"/>
    <property type="evidence" value="ECO:0007669"/>
    <property type="project" value="TreeGrafter"/>
</dbReference>
<dbReference type="GO" id="GO:0004664">
    <property type="term" value="F:prephenate dehydratase activity"/>
    <property type="evidence" value="ECO:0007669"/>
    <property type="project" value="UniProtKB-EC"/>
</dbReference>
<dbReference type="GO" id="GO:0009094">
    <property type="term" value="P:L-phenylalanine biosynthetic process"/>
    <property type="evidence" value="ECO:0007669"/>
    <property type="project" value="UniProtKB-UniPathway"/>
</dbReference>
<dbReference type="CDD" id="cd04905">
    <property type="entry name" value="ACT_CM-PDT"/>
    <property type="match status" value="1"/>
</dbReference>
<dbReference type="CDD" id="cd13632">
    <property type="entry name" value="PBP2_Aa-PDT_like"/>
    <property type="match status" value="1"/>
</dbReference>
<dbReference type="FunFam" id="3.30.70.260:FF:000012">
    <property type="entry name" value="Prephenate dehydratase"/>
    <property type="match status" value="1"/>
</dbReference>
<dbReference type="FunFam" id="3.40.190.10:FF:000064">
    <property type="entry name" value="Prephenate dehydratase"/>
    <property type="match status" value="1"/>
</dbReference>
<dbReference type="Gene3D" id="3.30.70.260">
    <property type="match status" value="1"/>
</dbReference>
<dbReference type="Gene3D" id="3.40.190.10">
    <property type="entry name" value="Periplasmic binding protein-like II"/>
    <property type="match status" value="2"/>
</dbReference>
<dbReference type="InterPro" id="IPR045865">
    <property type="entry name" value="ACT-like_dom_sf"/>
</dbReference>
<dbReference type="InterPro" id="IPR002912">
    <property type="entry name" value="ACT_dom"/>
</dbReference>
<dbReference type="InterPro" id="IPR008242">
    <property type="entry name" value="Chor_mutase/pphenate_deHydtase"/>
</dbReference>
<dbReference type="InterPro" id="IPR001086">
    <property type="entry name" value="Preph_deHydtase"/>
</dbReference>
<dbReference type="InterPro" id="IPR018528">
    <property type="entry name" value="Preph_deHydtase_CS"/>
</dbReference>
<dbReference type="NCBIfam" id="NF008865">
    <property type="entry name" value="PRK11898.1"/>
    <property type="match status" value="1"/>
</dbReference>
<dbReference type="PANTHER" id="PTHR21022">
    <property type="entry name" value="PREPHENATE DEHYDRATASE P PROTEIN"/>
    <property type="match status" value="1"/>
</dbReference>
<dbReference type="PANTHER" id="PTHR21022:SF19">
    <property type="entry name" value="PREPHENATE DEHYDRATASE-RELATED"/>
    <property type="match status" value="1"/>
</dbReference>
<dbReference type="Pfam" id="PF01842">
    <property type="entry name" value="ACT"/>
    <property type="match status" value="1"/>
</dbReference>
<dbReference type="Pfam" id="PF00800">
    <property type="entry name" value="PDT"/>
    <property type="match status" value="1"/>
</dbReference>
<dbReference type="PIRSF" id="PIRSF001500">
    <property type="entry name" value="Chor_mut_pdt_Ppr"/>
    <property type="match status" value="1"/>
</dbReference>
<dbReference type="SUPFAM" id="SSF55021">
    <property type="entry name" value="ACT-like"/>
    <property type="match status" value="1"/>
</dbReference>
<dbReference type="SUPFAM" id="SSF53850">
    <property type="entry name" value="Periplasmic binding protein-like II"/>
    <property type="match status" value="1"/>
</dbReference>
<dbReference type="PROSITE" id="PS51671">
    <property type="entry name" value="ACT"/>
    <property type="match status" value="1"/>
</dbReference>
<dbReference type="PROSITE" id="PS00857">
    <property type="entry name" value="PREPHENATE_DEHYDR_1"/>
    <property type="match status" value="1"/>
</dbReference>
<dbReference type="PROSITE" id="PS51171">
    <property type="entry name" value="PREPHENATE_DEHYDR_3"/>
    <property type="match status" value="1"/>
</dbReference>
<reference key="1">
    <citation type="journal article" date="1995" name="J. Bacteriol.">
        <title>Molecular cloning with a pMEA300-derived shuttle vector and characterization of the Amycolatopsis methanolica prephenate dehydratase gene.</title>
        <authorList>
            <person name="Vrijbloed J.W."/>
            <person name="van Hylckama Vlieg J."/>
            <person name="van der Put N.M."/>
            <person name="Hessels G.I."/>
            <person name="Dijkhuizen L."/>
        </authorList>
    </citation>
    <scope>NUCLEOTIDE SEQUENCE [GENOMIC DNA]</scope>
</reference>
<accession>Q44104</accession>
<feature type="chain" id="PRO_0000119175" description="Prephenate dehydratase">
    <location>
        <begin position="1"/>
        <end position="304"/>
    </location>
</feature>
<feature type="domain" description="Prephenate dehydratase" evidence="2">
    <location>
        <begin position="3"/>
        <end position="178"/>
    </location>
</feature>
<feature type="domain" description="ACT" evidence="3">
    <location>
        <begin position="193"/>
        <end position="271"/>
    </location>
</feature>
<feature type="site" description="Essential for activity" evidence="1">
    <location>
        <position position="171"/>
    </location>
</feature>
<gene>
    <name type="primary">pheA</name>
    <name type="synonym">pdt</name>
</gene>
<proteinExistence type="predicted"/>